<gene>
    <name evidence="1" type="primary">kaiB</name>
    <name type="ordered locus">AM1_0993</name>
</gene>
<feature type="chain" id="PRO_0000217760" description="Circadian clock oscillator protein KaiB">
    <location>
        <begin position="1"/>
        <end position="104"/>
    </location>
</feature>
<dbReference type="EMBL" id="AB120712">
    <property type="protein sequence ID" value="BAD21216.1"/>
    <property type="molecule type" value="Genomic_DNA"/>
</dbReference>
<dbReference type="EMBL" id="CP000828">
    <property type="protein sequence ID" value="ABW26035.1"/>
    <property type="molecule type" value="Genomic_DNA"/>
</dbReference>
<dbReference type="RefSeq" id="WP_010479745.1">
    <property type="nucleotide sequence ID" value="NC_009925.1"/>
</dbReference>
<dbReference type="SMR" id="Q6L8L2"/>
<dbReference type="STRING" id="329726.AM1_0993"/>
<dbReference type="KEGG" id="amr:AM1_0993"/>
<dbReference type="eggNOG" id="COG4251">
    <property type="taxonomic scope" value="Bacteria"/>
</dbReference>
<dbReference type="HOGENOM" id="CLU_144073_0_0_3"/>
<dbReference type="OrthoDB" id="5458519at2"/>
<dbReference type="Proteomes" id="UP000000268">
    <property type="component" value="Chromosome"/>
</dbReference>
<dbReference type="GO" id="GO:0007623">
    <property type="term" value="P:circadian rhythm"/>
    <property type="evidence" value="ECO:0007669"/>
    <property type="project" value="UniProtKB-UniRule"/>
</dbReference>
<dbReference type="CDD" id="cd02978">
    <property type="entry name" value="KaiB_like"/>
    <property type="match status" value="1"/>
</dbReference>
<dbReference type="FunFam" id="3.40.30.10:FF:000180">
    <property type="entry name" value="Circadian clock protein KaiB"/>
    <property type="match status" value="1"/>
</dbReference>
<dbReference type="Gene3D" id="3.40.30.10">
    <property type="entry name" value="Glutaredoxin"/>
    <property type="match status" value="1"/>
</dbReference>
<dbReference type="HAMAP" id="MF_01835">
    <property type="entry name" value="KaiB"/>
    <property type="match status" value="1"/>
</dbReference>
<dbReference type="InterPro" id="IPR013474">
    <property type="entry name" value="Circ_KaiB"/>
</dbReference>
<dbReference type="InterPro" id="IPR039022">
    <property type="entry name" value="KaiB-like"/>
</dbReference>
<dbReference type="InterPro" id="IPR011649">
    <property type="entry name" value="KaiB_domain"/>
</dbReference>
<dbReference type="InterPro" id="IPR036249">
    <property type="entry name" value="Thioredoxin-like_sf"/>
</dbReference>
<dbReference type="NCBIfam" id="TIGR02654">
    <property type="entry name" value="circ_KaiB"/>
    <property type="match status" value="1"/>
</dbReference>
<dbReference type="NCBIfam" id="NF006798">
    <property type="entry name" value="PRK09301.1"/>
    <property type="match status" value="1"/>
</dbReference>
<dbReference type="PANTHER" id="PTHR41709:SF2">
    <property type="entry name" value="CIRCADIAN CLOCK PROTEIN KAIB2"/>
    <property type="match status" value="1"/>
</dbReference>
<dbReference type="PANTHER" id="PTHR41709">
    <property type="entry name" value="KAIB-LIKE PROTEIN 1"/>
    <property type="match status" value="1"/>
</dbReference>
<dbReference type="Pfam" id="PF07689">
    <property type="entry name" value="KaiB"/>
    <property type="match status" value="1"/>
</dbReference>
<dbReference type="SMART" id="SM01248">
    <property type="entry name" value="KaiB"/>
    <property type="match status" value="1"/>
</dbReference>
<dbReference type="SUPFAM" id="SSF52833">
    <property type="entry name" value="Thioredoxin-like"/>
    <property type="match status" value="1"/>
</dbReference>
<reference key="1">
    <citation type="journal article" date="2004" name="Nat. Struct. Mol. Biol.">
        <title>Crystal structure of the C-terminal clock-oscillator domain of the cyanobacterial KaiA protein.</title>
        <authorList>
            <person name="Uzumaki T."/>
            <person name="Fujita M."/>
            <person name="Nakatsu T."/>
            <person name="Hayashi F."/>
            <person name="Shibata H."/>
            <person name="Itoh N."/>
            <person name="Kato H."/>
            <person name="Ishiura M."/>
        </authorList>
    </citation>
    <scope>NUCLEOTIDE SEQUENCE [GENOMIC DNA]</scope>
    <source>
        <strain>MBIC 11017</strain>
    </source>
</reference>
<reference key="2">
    <citation type="journal article" date="2008" name="Proc. Natl. Acad. Sci. U.S.A.">
        <title>Niche adaptation and genome expansion in the chlorophyll d-producing cyanobacterium Acaryochloris marina.</title>
        <authorList>
            <person name="Swingley W.D."/>
            <person name="Chen M."/>
            <person name="Cheung P.C."/>
            <person name="Conrad A.L."/>
            <person name="Dejesa L.C."/>
            <person name="Hao J."/>
            <person name="Honchak B.M."/>
            <person name="Karbach L.E."/>
            <person name="Kurdoglu A."/>
            <person name="Lahiri S."/>
            <person name="Mastrian S.D."/>
            <person name="Miyashita H."/>
            <person name="Page L."/>
            <person name="Ramakrishna P."/>
            <person name="Satoh S."/>
            <person name="Sattley W.M."/>
            <person name="Shimada Y."/>
            <person name="Taylor H.L."/>
            <person name="Tomo T."/>
            <person name="Tsuchiya T."/>
            <person name="Wang Z.T."/>
            <person name="Raymond J."/>
            <person name="Mimuro M."/>
            <person name="Blankenship R.E."/>
            <person name="Touchman J.W."/>
        </authorList>
    </citation>
    <scope>NUCLEOTIDE SEQUENCE [LARGE SCALE GENOMIC DNA]</scope>
    <source>
        <strain>MBIC 11017</strain>
    </source>
</reference>
<sequence length="104" mass="11709">MSSIRKTYVLKLYVAGNTPNSVRALRTLNHILETEFQGVYALKVIDVLKNPQLAEEDKILATPTLAKVLPPPVRKIIGDLSDRERVLIGLDLLYEELSDGIMEY</sequence>
<accession>Q6L8L2</accession>
<accession>B0C0R1</accession>
<name>KAIB_ACAM1</name>
<protein>
    <recommendedName>
        <fullName evidence="1">Circadian clock oscillator protein KaiB</fullName>
    </recommendedName>
</protein>
<keyword id="KW-0090">Biological rhythms</keyword>
<keyword id="KW-1185">Reference proteome</keyword>
<organism>
    <name type="scientific">Acaryochloris marina (strain MBIC 11017)</name>
    <dbReference type="NCBI Taxonomy" id="329726"/>
    <lineage>
        <taxon>Bacteria</taxon>
        <taxon>Bacillati</taxon>
        <taxon>Cyanobacteriota</taxon>
        <taxon>Cyanophyceae</taxon>
        <taxon>Acaryochloridales</taxon>
        <taxon>Acaryochloridaceae</taxon>
        <taxon>Acaryochloris</taxon>
    </lineage>
</organism>
<proteinExistence type="inferred from homology"/>
<comment type="function">
    <text evidence="1">Key component of the KaiABC oscillator complex, which constitutes the main circadian regulator in cyanobacteria. Complex composition changes during the circadian cycle to control KaiC phosphorylation. KaiA stimulates KaiC autophosphorylation, while KaiB sequesters KaiA, leading to KaiC autodephosphorylation. Phospho-Ser-431 KaiC accumulation triggers binding of KaiB to form the KaiB(6):KaiC(6) complex, leading to changes in output regulators CikA and SasA. KaiB switches to a thioredoxin-like fold (KaiB(fs)) when bound to KaiC. KaiB(6):KaiC(6) formation exposes a site for KaiA binding that sequesters KaiA from KaiC, making the KaiC(6):KaiB(6):KaiA(12) complex that results in KaiC autodephosphorylation.</text>
</comment>
<comment type="function">
    <text evidence="1">A metamorphic protein which reversibly switches between an inactive tetrameric fold and a rare, thioredoxin-like monomeric fold (KaiB(fs)). KaiB(fs) binds phospho-KaiC, KaiA and CikA. KaiA and CikA compete for binding to KaiB(fs), and KaiB(fs) and SasA compete for binding to KaiC, thus the clock oscillator and output signal pathway are tightly coupled.</text>
</comment>
<comment type="subunit">
    <text evidence="1">The KaiABC complex composition changes during the circadian cycle to control KaiC phosphorylation. Complexes KaiC(6), KaiA(2-4):KaiC(6), KaiB(6):KaiC(6) and KaiC(6):KaiB(6):KaiA(12) are among the most important forms, many form cooperatively. Undergoes a major conformational rearrangment; in the free state forms homotetramers as a dimer of dimers. When bound to the CI domain of KaiC switches to a monomeric thioredoxin-fold (KaiB(fs)). KaiB(fs) binds CikA, leading it to dephosphorylate phospho-RpaA.</text>
</comment>
<comment type="domain">
    <text evidence="1">Has 2 forms, fold switches to a thioredoxin-like fold (KaiB(fs)) when bound to KaiC.</text>
</comment>
<comment type="similarity">
    <text evidence="1">Belongs to the KaiB family.</text>
</comment>
<evidence type="ECO:0000255" key="1">
    <source>
        <dbReference type="HAMAP-Rule" id="MF_01835"/>
    </source>
</evidence>